<sequence length="400" mass="43602">MCSENFKKFLVSEASGGIFLIAAAVIAMVFQNGFLSEFYNSFLHIDMGFKFGEFLLQKPLILWVNDGLMAIFFFVLGLELKREILEGELRNPAQVVLPAVGAIGGIVVPAFIFYLFNHTDSFAARGWAIPTATDTAFALGIIMILGARVPASLKIFLVTLAIIDDVCAILIMAIFYSGDLSLISFGVAAIVILGLLALNLLNVNKKSFYLILGIILWISVLKSGVHATLAGVISAFFIPLKCKNSDKSLLKEIEHDLHGYITYFVLPVFAFVNAGISLKGIGLEQLTHPVSLGVILGLFLGKQIGVFGFCFVAIKLGFAKLPKYSCWISFYGLCILTGIGFTMSLFINSLSYNDTDKFAYADKLSVLIASVISGVLGYIVLYIASVRKEKIEVKAQNESF</sequence>
<keyword id="KW-0050">Antiport</keyword>
<keyword id="KW-0997">Cell inner membrane</keyword>
<keyword id="KW-1003">Cell membrane</keyword>
<keyword id="KW-0406">Ion transport</keyword>
<keyword id="KW-0472">Membrane</keyword>
<keyword id="KW-1185">Reference proteome</keyword>
<keyword id="KW-0915">Sodium</keyword>
<keyword id="KW-0739">Sodium transport</keyword>
<keyword id="KW-0812">Transmembrane</keyword>
<keyword id="KW-1133">Transmembrane helix</keyword>
<keyword id="KW-0813">Transport</keyword>
<proteinExistence type="inferred from homology"/>
<feature type="chain" id="PRO_0000334250" description="Na(+)/H(+) antiporter NhaA">
    <location>
        <begin position="1"/>
        <end position="400"/>
    </location>
</feature>
<feature type="transmembrane region" description="Helical" evidence="1">
    <location>
        <begin position="9"/>
        <end position="29"/>
    </location>
</feature>
<feature type="transmembrane region" description="Helical" evidence="1">
    <location>
        <begin position="60"/>
        <end position="80"/>
    </location>
</feature>
<feature type="transmembrane region" description="Helical" evidence="1">
    <location>
        <begin position="96"/>
        <end position="116"/>
    </location>
</feature>
<feature type="transmembrane region" description="Helical" evidence="1">
    <location>
        <begin position="127"/>
        <end position="147"/>
    </location>
</feature>
<feature type="transmembrane region" description="Helical" evidence="1">
    <location>
        <begin position="155"/>
        <end position="175"/>
    </location>
</feature>
<feature type="transmembrane region" description="Helical" evidence="1">
    <location>
        <begin position="180"/>
        <end position="200"/>
    </location>
</feature>
<feature type="transmembrane region" description="Helical" evidence="1">
    <location>
        <begin position="210"/>
        <end position="230"/>
    </location>
</feature>
<feature type="transmembrane region" description="Helical" evidence="1">
    <location>
        <begin position="263"/>
        <end position="283"/>
    </location>
</feature>
<feature type="transmembrane region" description="Helical" evidence="1">
    <location>
        <begin position="294"/>
        <end position="314"/>
    </location>
</feature>
<feature type="transmembrane region" description="Helical" evidence="1">
    <location>
        <begin position="327"/>
        <end position="347"/>
    </location>
</feature>
<feature type="transmembrane region" description="Helical" evidence="1">
    <location>
        <begin position="366"/>
        <end position="386"/>
    </location>
</feature>
<protein>
    <recommendedName>
        <fullName evidence="1">Na(+)/H(+) antiporter NhaA</fullName>
    </recommendedName>
    <alternativeName>
        <fullName evidence="1">Sodium/proton antiporter NhaA</fullName>
    </alternativeName>
</protein>
<organism>
    <name type="scientific">Campylobacter curvus (strain 525.92)</name>
    <dbReference type="NCBI Taxonomy" id="360105"/>
    <lineage>
        <taxon>Bacteria</taxon>
        <taxon>Pseudomonadati</taxon>
        <taxon>Campylobacterota</taxon>
        <taxon>Epsilonproteobacteria</taxon>
        <taxon>Campylobacterales</taxon>
        <taxon>Campylobacteraceae</taxon>
        <taxon>Campylobacter</taxon>
    </lineage>
</organism>
<gene>
    <name evidence="1" type="primary">nhaA</name>
    <name type="ordered locus">Ccur92_09850</name>
    <name type="ORF">CCV52592_1896</name>
</gene>
<evidence type="ECO:0000255" key="1">
    <source>
        <dbReference type="HAMAP-Rule" id="MF_01844"/>
    </source>
</evidence>
<accession>A7GYJ7</accession>
<name>NHAA_CAMC5</name>
<reference key="1">
    <citation type="submission" date="2007-07" db="EMBL/GenBank/DDBJ databases">
        <title>Genome sequence of Campylobacter curvus 525.92 isolated from human feces.</title>
        <authorList>
            <person name="Fouts D.E."/>
            <person name="Mongodin E.F."/>
            <person name="Puiu D."/>
            <person name="Sebastian Y."/>
            <person name="Miller W.G."/>
            <person name="Mandrell R.E."/>
            <person name="Lastovica A.J."/>
            <person name="Nelson K.E."/>
        </authorList>
    </citation>
    <scope>NUCLEOTIDE SEQUENCE [LARGE SCALE GENOMIC DNA]</scope>
    <source>
        <strain>525.92</strain>
    </source>
</reference>
<dbReference type="EMBL" id="CP000767">
    <property type="protein sequence ID" value="EAU00097.1"/>
    <property type="molecule type" value="Genomic_DNA"/>
</dbReference>
<dbReference type="RefSeq" id="WP_009651491.1">
    <property type="nucleotide sequence ID" value="NC_009715.2"/>
</dbReference>
<dbReference type="SMR" id="A7GYJ7"/>
<dbReference type="STRING" id="360105.CCV52592_1896"/>
<dbReference type="KEGG" id="ccv:CCV52592_1896"/>
<dbReference type="HOGENOM" id="CLU_015803_1_0_7"/>
<dbReference type="OrthoDB" id="9808135at2"/>
<dbReference type="Proteomes" id="UP000006380">
    <property type="component" value="Chromosome"/>
</dbReference>
<dbReference type="GO" id="GO:0005886">
    <property type="term" value="C:plasma membrane"/>
    <property type="evidence" value="ECO:0007669"/>
    <property type="project" value="UniProtKB-SubCell"/>
</dbReference>
<dbReference type="GO" id="GO:0015385">
    <property type="term" value="F:sodium:proton antiporter activity"/>
    <property type="evidence" value="ECO:0007669"/>
    <property type="project" value="TreeGrafter"/>
</dbReference>
<dbReference type="GO" id="GO:0006885">
    <property type="term" value="P:regulation of pH"/>
    <property type="evidence" value="ECO:0007669"/>
    <property type="project" value="InterPro"/>
</dbReference>
<dbReference type="Gene3D" id="1.20.1530.10">
    <property type="entry name" value="Na+/H+ antiporter like domain"/>
    <property type="match status" value="1"/>
</dbReference>
<dbReference type="HAMAP" id="MF_01844">
    <property type="entry name" value="NhaA"/>
    <property type="match status" value="1"/>
</dbReference>
<dbReference type="InterPro" id="IPR023171">
    <property type="entry name" value="Na/H_antiporter_dom_sf"/>
</dbReference>
<dbReference type="InterPro" id="IPR004670">
    <property type="entry name" value="NhaA"/>
</dbReference>
<dbReference type="NCBIfam" id="TIGR00773">
    <property type="entry name" value="NhaA"/>
    <property type="match status" value="1"/>
</dbReference>
<dbReference type="NCBIfam" id="NF007111">
    <property type="entry name" value="PRK09560.1"/>
    <property type="match status" value="1"/>
</dbReference>
<dbReference type="NCBIfam" id="NF007112">
    <property type="entry name" value="PRK09561.1"/>
    <property type="match status" value="1"/>
</dbReference>
<dbReference type="PANTHER" id="PTHR30341:SF0">
    <property type="entry name" value="NA(+)_H(+) ANTIPORTER NHAA"/>
    <property type="match status" value="1"/>
</dbReference>
<dbReference type="PANTHER" id="PTHR30341">
    <property type="entry name" value="SODIUM ION/PROTON ANTIPORTER NHAA-RELATED"/>
    <property type="match status" value="1"/>
</dbReference>
<dbReference type="Pfam" id="PF06965">
    <property type="entry name" value="Na_H_antiport_1"/>
    <property type="match status" value="1"/>
</dbReference>
<comment type="function">
    <text evidence="1">Na(+)/H(+) antiporter that extrudes sodium in exchange for external protons.</text>
</comment>
<comment type="catalytic activity">
    <reaction evidence="1">
        <text>Na(+)(in) + 2 H(+)(out) = Na(+)(out) + 2 H(+)(in)</text>
        <dbReference type="Rhea" id="RHEA:29251"/>
        <dbReference type="ChEBI" id="CHEBI:15378"/>
        <dbReference type="ChEBI" id="CHEBI:29101"/>
    </reaction>
    <physiologicalReaction direction="left-to-right" evidence="1">
        <dbReference type="Rhea" id="RHEA:29252"/>
    </physiologicalReaction>
</comment>
<comment type="subcellular location">
    <subcellularLocation>
        <location evidence="1">Cell inner membrane</location>
        <topology evidence="1">Multi-pass membrane protein</topology>
    </subcellularLocation>
</comment>
<comment type="similarity">
    <text evidence="1">Belongs to the NhaA Na(+)/H(+) (TC 2.A.33) antiporter family.</text>
</comment>